<comment type="function">
    <text evidence="1">The RuvA-RuvB-RuvC complex processes Holliday junction (HJ) DNA during genetic recombination and DNA repair, while the RuvA-RuvB complex plays an important role in the rescue of blocked DNA replication forks via replication fork reversal (RFR). RuvA specifically binds to HJ cruciform DNA, conferring on it an open structure. The RuvB hexamer acts as an ATP-dependent pump, pulling dsDNA into and through the RuvAB complex. HJ branch migration allows RuvC to scan DNA until it finds its consensus sequence, where it cleaves and resolves the cruciform DNA.</text>
</comment>
<comment type="subunit">
    <text evidence="1">Homotetramer. Forms an RuvA(8)-RuvB(12)-Holliday junction (HJ) complex. HJ DNA is sandwiched between 2 RuvA tetramers; dsDNA enters through RuvA and exits via RuvB. An RuvB hexamer assembles on each DNA strand where it exits the tetramer. Each RuvB hexamer is contacted by two RuvA subunits (via domain III) on 2 adjacent RuvB subunits; this complex drives branch migration. In the full resolvosome a probable DNA-RuvA(4)-RuvB(12)-RuvC(2) complex forms which resolves the HJ.</text>
</comment>
<comment type="subcellular location">
    <subcellularLocation>
        <location evidence="1">Cytoplasm</location>
    </subcellularLocation>
</comment>
<comment type="domain">
    <text evidence="1">Has three domains with a flexible linker between the domains II and III and assumes an 'L' shape. Domain III is highly mobile and contacts RuvB.</text>
</comment>
<comment type="similarity">
    <text evidence="1">Belongs to the RuvA family.</text>
</comment>
<gene>
    <name evidence="1" type="primary">ruvA</name>
    <name type="ordered locus">Mmar10_2423</name>
</gene>
<sequence>MIGMLTGRVAALGADELVLDVSGVGYLVGAGARTLSRLEPDQDIVLHIETHVREDAFKLYGFLDDIDRAWFVHLQNIQGVGAKAAFAILDTVPVSEIANAAALGDKSTFARAKGVGPKLATRIATELKDKAPPTGRSFSIGLPVHSDDGTTGGAPVAPAGGDSLAREDAVSALVNLGYNESQARQAVAKILRDADSEAPLGDVIRLSLKELAA</sequence>
<protein>
    <recommendedName>
        <fullName evidence="1">Holliday junction branch migration complex subunit RuvA</fullName>
    </recommendedName>
</protein>
<feature type="chain" id="PRO_1000002482" description="Holliday junction branch migration complex subunit RuvA">
    <location>
        <begin position="1"/>
        <end position="213"/>
    </location>
</feature>
<feature type="region of interest" description="Domain I" evidence="1">
    <location>
        <begin position="1"/>
        <end position="63"/>
    </location>
</feature>
<feature type="region of interest" description="Domain II" evidence="1">
    <location>
        <begin position="64"/>
        <end position="142"/>
    </location>
</feature>
<feature type="region of interest" description="Flexible linker" evidence="1">
    <location>
        <begin position="143"/>
        <end position="160"/>
    </location>
</feature>
<feature type="region of interest" description="Domain III" evidence="1">
    <location>
        <begin position="161"/>
        <end position="213"/>
    </location>
</feature>
<keyword id="KW-0963">Cytoplasm</keyword>
<keyword id="KW-0227">DNA damage</keyword>
<keyword id="KW-0233">DNA recombination</keyword>
<keyword id="KW-0234">DNA repair</keyword>
<keyword id="KW-0238">DNA-binding</keyword>
<keyword id="KW-1185">Reference proteome</keyword>
<dbReference type="EMBL" id="CP000449">
    <property type="protein sequence ID" value="ABI66715.1"/>
    <property type="molecule type" value="Genomic_DNA"/>
</dbReference>
<dbReference type="RefSeq" id="WP_011644360.1">
    <property type="nucleotide sequence ID" value="NC_008347.1"/>
</dbReference>
<dbReference type="SMR" id="Q0ALX8"/>
<dbReference type="STRING" id="394221.Mmar10_2423"/>
<dbReference type="KEGG" id="mmr:Mmar10_2423"/>
<dbReference type="eggNOG" id="COG0632">
    <property type="taxonomic scope" value="Bacteria"/>
</dbReference>
<dbReference type="HOGENOM" id="CLU_087936_3_0_5"/>
<dbReference type="OrthoDB" id="5293449at2"/>
<dbReference type="Proteomes" id="UP000001964">
    <property type="component" value="Chromosome"/>
</dbReference>
<dbReference type="GO" id="GO:0005737">
    <property type="term" value="C:cytoplasm"/>
    <property type="evidence" value="ECO:0007669"/>
    <property type="project" value="UniProtKB-SubCell"/>
</dbReference>
<dbReference type="GO" id="GO:0009379">
    <property type="term" value="C:Holliday junction helicase complex"/>
    <property type="evidence" value="ECO:0007669"/>
    <property type="project" value="InterPro"/>
</dbReference>
<dbReference type="GO" id="GO:0048476">
    <property type="term" value="C:Holliday junction resolvase complex"/>
    <property type="evidence" value="ECO:0007669"/>
    <property type="project" value="UniProtKB-UniRule"/>
</dbReference>
<dbReference type="GO" id="GO:0005524">
    <property type="term" value="F:ATP binding"/>
    <property type="evidence" value="ECO:0007669"/>
    <property type="project" value="InterPro"/>
</dbReference>
<dbReference type="GO" id="GO:0000400">
    <property type="term" value="F:four-way junction DNA binding"/>
    <property type="evidence" value="ECO:0007669"/>
    <property type="project" value="UniProtKB-UniRule"/>
</dbReference>
<dbReference type="GO" id="GO:0009378">
    <property type="term" value="F:four-way junction helicase activity"/>
    <property type="evidence" value="ECO:0007669"/>
    <property type="project" value="InterPro"/>
</dbReference>
<dbReference type="GO" id="GO:0006310">
    <property type="term" value="P:DNA recombination"/>
    <property type="evidence" value="ECO:0007669"/>
    <property type="project" value="UniProtKB-UniRule"/>
</dbReference>
<dbReference type="GO" id="GO:0006281">
    <property type="term" value="P:DNA repair"/>
    <property type="evidence" value="ECO:0007669"/>
    <property type="project" value="UniProtKB-UniRule"/>
</dbReference>
<dbReference type="CDD" id="cd14332">
    <property type="entry name" value="UBA_RuvA_C"/>
    <property type="match status" value="1"/>
</dbReference>
<dbReference type="Gene3D" id="1.10.150.20">
    <property type="entry name" value="5' to 3' exonuclease, C-terminal subdomain"/>
    <property type="match status" value="1"/>
</dbReference>
<dbReference type="Gene3D" id="1.10.8.10">
    <property type="entry name" value="DNA helicase RuvA subunit, C-terminal domain"/>
    <property type="match status" value="1"/>
</dbReference>
<dbReference type="Gene3D" id="2.40.50.140">
    <property type="entry name" value="Nucleic acid-binding proteins"/>
    <property type="match status" value="1"/>
</dbReference>
<dbReference type="HAMAP" id="MF_00031">
    <property type="entry name" value="DNA_HJ_migration_RuvA"/>
    <property type="match status" value="1"/>
</dbReference>
<dbReference type="InterPro" id="IPR013849">
    <property type="entry name" value="DNA_helicase_Holl-junc_RuvA_I"/>
</dbReference>
<dbReference type="InterPro" id="IPR012340">
    <property type="entry name" value="NA-bd_OB-fold"/>
</dbReference>
<dbReference type="InterPro" id="IPR000085">
    <property type="entry name" value="RuvA"/>
</dbReference>
<dbReference type="InterPro" id="IPR010994">
    <property type="entry name" value="RuvA_2-like"/>
</dbReference>
<dbReference type="InterPro" id="IPR011114">
    <property type="entry name" value="RuvA_C"/>
</dbReference>
<dbReference type="InterPro" id="IPR036267">
    <property type="entry name" value="RuvA_C_sf"/>
</dbReference>
<dbReference type="NCBIfam" id="TIGR00084">
    <property type="entry name" value="ruvA"/>
    <property type="match status" value="1"/>
</dbReference>
<dbReference type="Pfam" id="PF14520">
    <property type="entry name" value="HHH_5"/>
    <property type="match status" value="1"/>
</dbReference>
<dbReference type="Pfam" id="PF07499">
    <property type="entry name" value="RuvA_C"/>
    <property type="match status" value="1"/>
</dbReference>
<dbReference type="Pfam" id="PF01330">
    <property type="entry name" value="RuvA_N"/>
    <property type="match status" value="1"/>
</dbReference>
<dbReference type="SUPFAM" id="SSF46929">
    <property type="entry name" value="DNA helicase RuvA subunit, C-terminal domain"/>
    <property type="match status" value="1"/>
</dbReference>
<dbReference type="SUPFAM" id="SSF50249">
    <property type="entry name" value="Nucleic acid-binding proteins"/>
    <property type="match status" value="1"/>
</dbReference>
<dbReference type="SUPFAM" id="SSF47781">
    <property type="entry name" value="RuvA domain 2-like"/>
    <property type="match status" value="1"/>
</dbReference>
<proteinExistence type="inferred from homology"/>
<evidence type="ECO:0000255" key="1">
    <source>
        <dbReference type="HAMAP-Rule" id="MF_00031"/>
    </source>
</evidence>
<name>RUVA_MARMM</name>
<reference key="1">
    <citation type="submission" date="2006-08" db="EMBL/GenBank/DDBJ databases">
        <title>Complete sequence of Maricaulis maris MCS10.</title>
        <authorList>
            <consortium name="US DOE Joint Genome Institute"/>
            <person name="Copeland A."/>
            <person name="Lucas S."/>
            <person name="Lapidus A."/>
            <person name="Barry K."/>
            <person name="Detter J.C."/>
            <person name="Glavina del Rio T."/>
            <person name="Hammon N."/>
            <person name="Israni S."/>
            <person name="Dalin E."/>
            <person name="Tice H."/>
            <person name="Pitluck S."/>
            <person name="Saunders E."/>
            <person name="Brettin T."/>
            <person name="Bruce D."/>
            <person name="Han C."/>
            <person name="Tapia R."/>
            <person name="Gilna P."/>
            <person name="Schmutz J."/>
            <person name="Larimer F."/>
            <person name="Land M."/>
            <person name="Hauser L."/>
            <person name="Kyrpides N."/>
            <person name="Mikhailova N."/>
            <person name="Viollier P."/>
            <person name="Stephens C."/>
            <person name="Richardson P."/>
        </authorList>
    </citation>
    <scope>NUCLEOTIDE SEQUENCE [LARGE SCALE GENOMIC DNA]</scope>
    <source>
        <strain>MCS10</strain>
    </source>
</reference>
<accession>Q0ALX8</accession>
<organism>
    <name type="scientific">Maricaulis maris (strain MCS10)</name>
    <name type="common">Caulobacter maris</name>
    <dbReference type="NCBI Taxonomy" id="394221"/>
    <lineage>
        <taxon>Bacteria</taxon>
        <taxon>Pseudomonadati</taxon>
        <taxon>Pseudomonadota</taxon>
        <taxon>Alphaproteobacteria</taxon>
        <taxon>Maricaulales</taxon>
        <taxon>Maricaulaceae</taxon>
        <taxon>Maricaulis</taxon>
    </lineage>
</organism>